<protein>
    <recommendedName>
        <fullName>Virion membrane protein OPG141</fullName>
    </recommendedName>
</protein>
<proteinExistence type="evidence at transcript level"/>
<comment type="function">
    <text evidence="1">Protein probably involved in counteracting host defense, since it enhances virulence in vivo.</text>
</comment>
<comment type="subcellular location">
    <subcellularLocation>
        <location evidence="1">Virion membrane</location>
        <topology evidence="1">Multi-pass membrane protein</topology>
    </subcellularLocation>
    <text evidence="1">Component of the mature virion (MV) membrane.</text>
</comment>
<comment type="induction">
    <text>Expressed in the late phase of the viral replicative cycle.</text>
</comment>
<comment type="PTM">
    <text evidence="1">Not phosphorylated.</text>
</comment>
<comment type="similarity">
    <text evidence="3">Belongs to the orthopoxvirus OPG141 protein family.</text>
</comment>
<organismHost>
    <name type="scientific">Homo sapiens</name>
    <name type="common">Human</name>
    <dbReference type="NCBI Taxonomy" id="9606"/>
</organismHost>
<keyword id="KW-0067">ATP-binding</keyword>
<keyword id="KW-0238">DNA-binding</keyword>
<keyword id="KW-0347">Helicase</keyword>
<keyword id="KW-0378">Hydrolase</keyword>
<keyword id="KW-0426">Late protein</keyword>
<keyword id="KW-0472">Membrane</keyword>
<keyword id="KW-0547">Nucleotide-binding</keyword>
<keyword id="KW-0597">Phosphoprotein</keyword>
<keyword id="KW-1185">Reference proteome</keyword>
<keyword id="KW-0804">Transcription</keyword>
<keyword id="KW-0805">Transcription regulation</keyword>
<keyword id="KW-0806">Transcription termination</keyword>
<keyword id="KW-0812">Transmembrane</keyword>
<keyword id="KW-1133">Transmembrane helix</keyword>
<keyword id="KW-0946">Virion</keyword>
<gene>
    <name type="primary">OPG141</name>
    <name type="ORF">A 14.5L</name>
</gene>
<feature type="chain" id="PRO_0000414118" description="Virion membrane protein OPG141">
    <location>
        <begin position="1"/>
        <end position="53"/>
    </location>
</feature>
<feature type="topological domain" description="Intravirion" evidence="2">
    <location>
        <begin position="1"/>
        <end position="4"/>
    </location>
</feature>
<feature type="transmembrane region" description="Helical" evidence="2">
    <location>
        <begin position="5"/>
        <end position="25"/>
    </location>
</feature>
<feature type="topological domain" description="Virion surface" evidence="2">
    <location>
        <begin position="26"/>
        <end position="29"/>
    </location>
</feature>
<feature type="transmembrane region" description="Helical" evidence="2">
    <location>
        <begin position="30"/>
        <end position="50"/>
    </location>
</feature>
<feature type="topological domain" description="Intravirion" evidence="2">
    <location>
        <begin position="51"/>
        <end position="53"/>
    </location>
</feature>
<dbReference type="EMBL" id="M35027">
    <property type="status" value="NOT_ANNOTATED_CDS"/>
    <property type="molecule type" value="Genomic_DNA"/>
</dbReference>
<dbReference type="SMR" id="P0CK28"/>
<dbReference type="Proteomes" id="UP000008269">
    <property type="component" value="Segment"/>
</dbReference>
<dbReference type="GO" id="GO:0016020">
    <property type="term" value="C:membrane"/>
    <property type="evidence" value="ECO:0007669"/>
    <property type="project" value="UniProtKB-KW"/>
</dbReference>
<dbReference type="GO" id="GO:0055036">
    <property type="term" value="C:virion membrane"/>
    <property type="evidence" value="ECO:0007669"/>
    <property type="project" value="UniProtKB-SubCell"/>
</dbReference>
<dbReference type="GO" id="GO:0005524">
    <property type="term" value="F:ATP binding"/>
    <property type="evidence" value="ECO:0007669"/>
    <property type="project" value="UniProtKB-KW"/>
</dbReference>
<dbReference type="GO" id="GO:0003677">
    <property type="term" value="F:DNA binding"/>
    <property type="evidence" value="ECO:0007669"/>
    <property type="project" value="UniProtKB-KW"/>
</dbReference>
<dbReference type="GO" id="GO:0004386">
    <property type="term" value="F:helicase activity"/>
    <property type="evidence" value="ECO:0007669"/>
    <property type="project" value="UniProtKB-KW"/>
</dbReference>
<dbReference type="GO" id="GO:0016787">
    <property type="term" value="F:hydrolase activity"/>
    <property type="evidence" value="ECO:0007669"/>
    <property type="project" value="UniProtKB-KW"/>
</dbReference>
<dbReference type="GO" id="GO:0006353">
    <property type="term" value="P:DNA-templated transcription termination"/>
    <property type="evidence" value="ECO:0007669"/>
    <property type="project" value="UniProtKB-KW"/>
</dbReference>
<dbReference type="InterPro" id="IPR009372">
    <property type="entry name" value="Poxvirus_A14.5"/>
</dbReference>
<dbReference type="Pfam" id="PF06269">
    <property type="entry name" value="DUF1029"/>
    <property type="match status" value="1"/>
</dbReference>
<evidence type="ECO:0000250" key="1">
    <source>
        <dbReference type="UniProtKB" id="Q80HV6"/>
    </source>
</evidence>
<evidence type="ECO:0000255" key="2"/>
<evidence type="ECO:0000305" key="3"/>
<accession>P0CK28</accession>
<name>PG141_VACCC</name>
<reference key="1">
    <citation type="journal article" date="1990" name="Virology">
        <title>The complete DNA sequence of vaccinia virus.</title>
        <authorList>
            <person name="Goebel S.J."/>
            <person name="Johnson G.P."/>
            <person name="Perkus M.E."/>
            <person name="Davis S.W."/>
            <person name="Winslow J.P."/>
            <person name="Paoletti E."/>
        </authorList>
    </citation>
    <scope>NUCLEOTIDE SEQUENCE [LARGE SCALE GENOMIC DNA]</scope>
</reference>
<reference key="2">
    <citation type="journal article" date="1990" name="Virology">
        <title>Appendix to 'The complete DNA sequence of vaccinia virus'.</title>
        <authorList>
            <person name="Goebel S.J."/>
            <person name="Johnson G.P."/>
            <person name="Perkus M.E."/>
            <person name="Davis S.W."/>
            <person name="Winslow J.P."/>
            <person name="Paoletti E."/>
        </authorList>
    </citation>
    <scope>NUCLEOTIDE SEQUENCE [LARGE SCALE GENOMIC DNA]</scope>
</reference>
<sequence>MISNYEPLLLLVITCCVLLFNFTISSKTKIDIIFAVQTIVFIWFIFHFVHSAI</sequence>
<organism>
    <name type="scientific">Vaccinia virus (strain Copenhagen)</name>
    <name type="common">VACV</name>
    <dbReference type="NCBI Taxonomy" id="10249"/>
    <lineage>
        <taxon>Viruses</taxon>
        <taxon>Varidnaviria</taxon>
        <taxon>Bamfordvirae</taxon>
        <taxon>Nucleocytoviricota</taxon>
        <taxon>Pokkesviricetes</taxon>
        <taxon>Chitovirales</taxon>
        <taxon>Poxviridae</taxon>
        <taxon>Chordopoxvirinae</taxon>
        <taxon>Orthopoxvirus</taxon>
        <taxon>Vaccinia virus</taxon>
    </lineage>
</organism>